<feature type="chain" id="PRO_1000073711" description="Isoleucine--tRNA ligase">
    <location>
        <begin position="1"/>
        <end position="917"/>
    </location>
</feature>
<feature type="short sequence motif" description="'HIGH' region">
    <location>
        <begin position="57"/>
        <end position="67"/>
    </location>
</feature>
<feature type="short sequence motif" description="'KMSKS' region">
    <location>
        <begin position="595"/>
        <end position="599"/>
    </location>
</feature>
<feature type="binding site" evidence="1">
    <location>
        <position position="554"/>
    </location>
    <ligand>
        <name>L-isoleucyl-5'-AMP</name>
        <dbReference type="ChEBI" id="CHEBI:178002"/>
    </ligand>
</feature>
<feature type="binding site" evidence="1">
    <location>
        <position position="598"/>
    </location>
    <ligand>
        <name>ATP</name>
        <dbReference type="ChEBI" id="CHEBI:30616"/>
    </ligand>
</feature>
<feature type="binding site" evidence="1">
    <location>
        <position position="886"/>
    </location>
    <ligand>
        <name>Zn(2+)</name>
        <dbReference type="ChEBI" id="CHEBI:29105"/>
    </ligand>
</feature>
<feature type="binding site" evidence="1">
    <location>
        <position position="889"/>
    </location>
    <ligand>
        <name>Zn(2+)</name>
        <dbReference type="ChEBI" id="CHEBI:29105"/>
    </ligand>
</feature>
<feature type="binding site" evidence="1">
    <location>
        <position position="906"/>
    </location>
    <ligand>
        <name>Zn(2+)</name>
        <dbReference type="ChEBI" id="CHEBI:29105"/>
    </ligand>
</feature>
<feature type="binding site" evidence="1">
    <location>
        <position position="909"/>
    </location>
    <ligand>
        <name>Zn(2+)</name>
        <dbReference type="ChEBI" id="CHEBI:29105"/>
    </ligand>
</feature>
<protein>
    <recommendedName>
        <fullName evidence="1">Isoleucine--tRNA ligase</fullName>
        <ecNumber evidence="1">6.1.1.5</ecNumber>
    </recommendedName>
    <alternativeName>
        <fullName evidence="1">Isoleucyl-tRNA synthetase</fullName>
        <shortName evidence="1">IleRS</shortName>
    </alternativeName>
</protein>
<sequence length="917" mass="104886">MDYKETLLMPKTDFPMRGGLPNKEPQIQEKWDAEDQYHKALEKNKGNETFILHDGPPYANGNLHMGHALNKILKDFIVRYKTMQGFYAPYVPGWDTHGLPIEQALTKKGVDRKKMSTAEFREKCKEFALEQIELQKKDFRRLGVRGDFNDPYITLKPEYEAAQIRIFGEMADKGLIYKGKKPVYWSPSSESSLAEAEIEYHDKRSASIYVAFDVKDDKGVVDADAKFIIWTTTPWTIPSNVAITVHPELKYGQYNVNGEKYIIAEALSDAVAEALDWDKASIKLEKEYTGKELEYVVAQHPFLDRESLVINGDHVTTDAGTGCVHTAPGHGEDDYIVGQKYELPVISPIDDKGVFTEEGGQFEGMFYDKANKAVTDLLTEKGALLKLDFITHSYPHDWRTKKPVIFRATPQWFASISKVRQDILDAIENTNFKVNWGKTRIYNMVRDRGEWVISRQRVWGVPLPVFYAENGEIIMTKETVNHVADLFAEHGSNIWFEREAKDLLPEGFTHPGSPNGTFTKETDIMDVWFDSGSSHRGVLETRPELSFPADMYLEGSDQYRGWFNSSITTSVATRGVSPYKFLLSHGFVMDGEGKKMSKSLGNVIVPDQVVKQKGADIARLWVSSTDYLADVRISDEILKQTSDVYRKIRNTLRFMLGNINDFNPDTDSIPESELLEVDRYLLNRLREFTASTINNYENFDYLNIYQEVQNFINVELSNFYLDYGKDILYIEQRDSHIRRSMQTVLYQILVDMTKLLAPILVHTAEEVWSHTPHVKEESVHLADMPKVVEVDQALLDKWRTFMNLRDDVNRALETARNEKVIGKSLEAKVTIASNDKFNASEFLTSFDALHQLFIVSQVKVVDKLDDQATAYEHGDIVIEHADGEKCERCWNYSEDLGAVDELTHLCPRCQQVVKSLV</sequence>
<keyword id="KW-0030">Aminoacyl-tRNA synthetase</keyword>
<keyword id="KW-0067">ATP-binding</keyword>
<keyword id="KW-0963">Cytoplasm</keyword>
<keyword id="KW-0436">Ligase</keyword>
<keyword id="KW-0479">Metal-binding</keyword>
<keyword id="KW-0547">Nucleotide-binding</keyword>
<keyword id="KW-0648">Protein biosynthesis</keyword>
<keyword id="KW-0862">Zinc</keyword>
<accession>A6QG93</accession>
<name>SYI_STAAE</name>
<comment type="function">
    <text evidence="1">Catalyzes the attachment of isoleucine to tRNA(Ile). As IleRS can inadvertently accommodate and process structurally similar amino acids such as valine, to avoid such errors it has two additional distinct tRNA(Ile)-dependent editing activities. One activity is designated as 'pretransfer' editing and involves the hydrolysis of activated Val-AMP. The other activity is designated 'posttransfer' editing and involves deacylation of mischarged Val-tRNA(Ile).</text>
</comment>
<comment type="catalytic activity">
    <reaction evidence="1">
        <text>tRNA(Ile) + L-isoleucine + ATP = L-isoleucyl-tRNA(Ile) + AMP + diphosphate</text>
        <dbReference type="Rhea" id="RHEA:11060"/>
        <dbReference type="Rhea" id="RHEA-COMP:9666"/>
        <dbReference type="Rhea" id="RHEA-COMP:9695"/>
        <dbReference type="ChEBI" id="CHEBI:30616"/>
        <dbReference type="ChEBI" id="CHEBI:33019"/>
        <dbReference type="ChEBI" id="CHEBI:58045"/>
        <dbReference type="ChEBI" id="CHEBI:78442"/>
        <dbReference type="ChEBI" id="CHEBI:78528"/>
        <dbReference type="ChEBI" id="CHEBI:456215"/>
        <dbReference type="EC" id="6.1.1.5"/>
    </reaction>
</comment>
<comment type="cofactor">
    <cofactor evidence="1">
        <name>Zn(2+)</name>
        <dbReference type="ChEBI" id="CHEBI:29105"/>
    </cofactor>
    <text evidence="1">Binds 1 zinc ion per subunit.</text>
</comment>
<comment type="subunit">
    <text evidence="1">Monomer.</text>
</comment>
<comment type="subcellular location">
    <subcellularLocation>
        <location evidence="1">Cytoplasm</location>
    </subcellularLocation>
</comment>
<comment type="domain">
    <text evidence="1">IleRS has two distinct active sites: one for aminoacylation and one for editing. The misactivated valine is translocated from the active site to the editing site, which sterically excludes the correctly activated isoleucine. The single editing site contains two valyl binding pockets, one specific for each substrate (Val-AMP or Val-tRNA(Ile)).</text>
</comment>
<comment type="similarity">
    <text evidence="1">Belongs to the class-I aminoacyl-tRNA synthetase family. IleS type 1 subfamily.</text>
</comment>
<evidence type="ECO:0000255" key="1">
    <source>
        <dbReference type="HAMAP-Rule" id="MF_02002"/>
    </source>
</evidence>
<reference key="1">
    <citation type="journal article" date="2008" name="J. Bacteriol.">
        <title>Genome sequence of Staphylococcus aureus strain Newman and comparative analysis of staphylococcal genomes: polymorphism and evolution of two major pathogenicity islands.</title>
        <authorList>
            <person name="Baba T."/>
            <person name="Bae T."/>
            <person name="Schneewind O."/>
            <person name="Takeuchi F."/>
            <person name="Hiramatsu K."/>
        </authorList>
    </citation>
    <scope>NUCLEOTIDE SEQUENCE [LARGE SCALE GENOMIC DNA]</scope>
    <source>
        <strain>Newman</strain>
    </source>
</reference>
<organism>
    <name type="scientific">Staphylococcus aureus (strain Newman)</name>
    <dbReference type="NCBI Taxonomy" id="426430"/>
    <lineage>
        <taxon>Bacteria</taxon>
        <taxon>Bacillati</taxon>
        <taxon>Bacillota</taxon>
        <taxon>Bacilli</taxon>
        <taxon>Bacillales</taxon>
        <taxon>Staphylococcaceae</taxon>
        <taxon>Staphylococcus</taxon>
    </lineage>
</organism>
<dbReference type="EC" id="6.1.1.5" evidence="1"/>
<dbReference type="EMBL" id="AP009351">
    <property type="protein sequence ID" value="BAF67375.1"/>
    <property type="molecule type" value="Genomic_DNA"/>
</dbReference>
<dbReference type="RefSeq" id="WP_000384691.1">
    <property type="nucleotide sequence ID" value="NZ_JBBIAE010000001.1"/>
</dbReference>
<dbReference type="SMR" id="A6QG93"/>
<dbReference type="KEGG" id="sae:NWMN_1103"/>
<dbReference type="HOGENOM" id="CLU_001493_7_1_9"/>
<dbReference type="Proteomes" id="UP000006386">
    <property type="component" value="Chromosome"/>
</dbReference>
<dbReference type="GO" id="GO:0005829">
    <property type="term" value="C:cytosol"/>
    <property type="evidence" value="ECO:0007669"/>
    <property type="project" value="TreeGrafter"/>
</dbReference>
<dbReference type="GO" id="GO:0002161">
    <property type="term" value="F:aminoacyl-tRNA deacylase activity"/>
    <property type="evidence" value="ECO:0007669"/>
    <property type="project" value="InterPro"/>
</dbReference>
<dbReference type="GO" id="GO:0005524">
    <property type="term" value="F:ATP binding"/>
    <property type="evidence" value="ECO:0007669"/>
    <property type="project" value="UniProtKB-UniRule"/>
</dbReference>
<dbReference type="GO" id="GO:0004822">
    <property type="term" value="F:isoleucine-tRNA ligase activity"/>
    <property type="evidence" value="ECO:0007669"/>
    <property type="project" value="UniProtKB-UniRule"/>
</dbReference>
<dbReference type="GO" id="GO:0000049">
    <property type="term" value="F:tRNA binding"/>
    <property type="evidence" value="ECO:0007669"/>
    <property type="project" value="InterPro"/>
</dbReference>
<dbReference type="GO" id="GO:0008270">
    <property type="term" value="F:zinc ion binding"/>
    <property type="evidence" value="ECO:0007669"/>
    <property type="project" value="UniProtKB-UniRule"/>
</dbReference>
<dbReference type="GO" id="GO:0006428">
    <property type="term" value="P:isoleucyl-tRNA aminoacylation"/>
    <property type="evidence" value="ECO:0007669"/>
    <property type="project" value="UniProtKB-UniRule"/>
</dbReference>
<dbReference type="CDD" id="cd07960">
    <property type="entry name" value="Anticodon_Ia_Ile_BEm"/>
    <property type="match status" value="1"/>
</dbReference>
<dbReference type="CDD" id="cd00818">
    <property type="entry name" value="IleRS_core"/>
    <property type="match status" value="1"/>
</dbReference>
<dbReference type="FunFam" id="1.10.10.830:FF:000001">
    <property type="entry name" value="Isoleucine--tRNA ligase"/>
    <property type="match status" value="1"/>
</dbReference>
<dbReference type="FunFam" id="1.10.730.20:FF:000001">
    <property type="entry name" value="Isoleucine--tRNA ligase"/>
    <property type="match status" value="1"/>
</dbReference>
<dbReference type="FunFam" id="3.40.50.620:FF:000152">
    <property type="entry name" value="Isoleucine--tRNA ligase"/>
    <property type="match status" value="1"/>
</dbReference>
<dbReference type="FunFam" id="3.90.740.10:FF:000006">
    <property type="entry name" value="Isoleucine--tRNA ligase"/>
    <property type="match status" value="1"/>
</dbReference>
<dbReference type="Gene3D" id="1.10.730.20">
    <property type="match status" value="1"/>
</dbReference>
<dbReference type="Gene3D" id="3.40.50.620">
    <property type="entry name" value="HUPs"/>
    <property type="match status" value="2"/>
</dbReference>
<dbReference type="Gene3D" id="1.10.10.830">
    <property type="entry name" value="Ile-tRNA synthetase CP2 domain-like"/>
    <property type="match status" value="1"/>
</dbReference>
<dbReference type="HAMAP" id="MF_02002">
    <property type="entry name" value="Ile_tRNA_synth_type1"/>
    <property type="match status" value="1"/>
</dbReference>
<dbReference type="InterPro" id="IPR001412">
    <property type="entry name" value="aa-tRNA-synth_I_CS"/>
</dbReference>
<dbReference type="InterPro" id="IPR002300">
    <property type="entry name" value="aa-tRNA-synth_Ia"/>
</dbReference>
<dbReference type="InterPro" id="IPR033708">
    <property type="entry name" value="Anticodon_Ile_BEm"/>
</dbReference>
<dbReference type="InterPro" id="IPR002301">
    <property type="entry name" value="Ile-tRNA-ligase"/>
</dbReference>
<dbReference type="InterPro" id="IPR023585">
    <property type="entry name" value="Ile-tRNA-ligase_type1"/>
</dbReference>
<dbReference type="InterPro" id="IPR050081">
    <property type="entry name" value="Ile-tRNA_ligase"/>
</dbReference>
<dbReference type="InterPro" id="IPR013155">
    <property type="entry name" value="M/V/L/I-tRNA-synth_anticd-bd"/>
</dbReference>
<dbReference type="InterPro" id="IPR014729">
    <property type="entry name" value="Rossmann-like_a/b/a_fold"/>
</dbReference>
<dbReference type="InterPro" id="IPR009080">
    <property type="entry name" value="tRNAsynth_Ia_anticodon-bd"/>
</dbReference>
<dbReference type="InterPro" id="IPR009008">
    <property type="entry name" value="Val/Leu/Ile-tRNA-synth_edit"/>
</dbReference>
<dbReference type="InterPro" id="IPR010663">
    <property type="entry name" value="Znf_FPG/IleRS"/>
</dbReference>
<dbReference type="NCBIfam" id="TIGR00392">
    <property type="entry name" value="ileS"/>
    <property type="match status" value="1"/>
</dbReference>
<dbReference type="PANTHER" id="PTHR42765:SF1">
    <property type="entry name" value="ISOLEUCINE--TRNA LIGASE, MITOCHONDRIAL"/>
    <property type="match status" value="1"/>
</dbReference>
<dbReference type="PANTHER" id="PTHR42765">
    <property type="entry name" value="SOLEUCYL-TRNA SYNTHETASE"/>
    <property type="match status" value="1"/>
</dbReference>
<dbReference type="Pfam" id="PF08264">
    <property type="entry name" value="Anticodon_1"/>
    <property type="match status" value="1"/>
</dbReference>
<dbReference type="Pfam" id="PF00133">
    <property type="entry name" value="tRNA-synt_1"/>
    <property type="match status" value="1"/>
</dbReference>
<dbReference type="Pfam" id="PF06827">
    <property type="entry name" value="zf-FPG_IleRS"/>
    <property type="match status" value="1"/>
</dbReference>
<dbReference type="PRINTS" id="PR00984">
    <property type="entry name" value="TRNASYNTHILE"/>
</dbReference>
<dbReference type="SUPFAM" id="SSF47323">
    <property type="entry name" value="Anticodon-binding domain of a subclass of class I aminoacyl-tRNA synthetases"/>
    <property type="match status" value="1"/>
</dbReference>
<dbReference type="SUPFAM" id="SSF52374">
    <property type="entry name" value="Nucleotidylyl transferase"/>
    <property type="match status" value="1"/>
</dbReference>
<dbReference type="SUPFAM" id="SSF50677">
    <property type="entry name" value="ValRS/IleRS/LeuRS editing domain"/>
    <property type="match status" value="1"/>
</dbReference>
<dbReference type="PROSITE" id="PS00178">
    <property type="entry name" value="AA_TRNA_LIGASE_I"/>
    <property type="match status" value="1"/>
</dbReference>
<gene>
    <name evidence="1" type="primary">ileS</name>
    <name type="ordered locus">NWMN_1103</name>
</gene>
<proteinExistence type="inferred from homology"/>